<feature type="chain" id="PRO_0000379357" description="ATP-dependent helicase/nuclease subunit A">
    <location>
        <begin position="1"/>
        <end position="1220"/>
    </location>
</feature>
<feature type="domain" description="UvrD-like helicase ATP-binding" evidence="1">
    <location>
        <begin position="26"/>
        <end position="482"/>
    </location>
</feature>
<feature type="domain" description="UvrD-like helicase C-terminal" evidence="1">
    <location>
        <begin position="519"/>
        <end position="807"/>
    </location>
</feature>
<feature type="region of interest" description="Disordered" evidence="2">
    <location>
        <begin position="533"/>
        <end position="559"/>
    </location>
</feature>
<feature type="binding site" evidence="1">
    <location>
        <begin position="47"/>
        <end position="54"/>
    </location>
    <ligand>
        <name>ATP</name>
        <dbReference type="ChEBI" id="CHEBI:30616"/>
    </ligand>
</feature>
<organism>
    <name type="scientific">Streptococcus uberis (strain ATCC BAA-854 / 0140J)</name>
    <dbReference type="NCBI Taxonomy" id="218495"/>
    <lineage>
        <taxon>Bacteria</taxon>
        <taxon>Bacillati</taxon>
        <taxon>Bacillota</taxon>
        <taxon>Bacilli</taxon>
        <taxon>Lactobacillales</taxon>
        <taxon>Streptococcaceae</taxon>
        <taxon>Streptococcus</taxon>
    </lineage>
</organism>
<evidence type="ECO:0000255" key="1">
    <source>
        <dbReference type="HAMAP-Rule" id="MF_01451"/>
    </source>
</evidence>
<evidence type="ECO:0000256" key="2">
    <source>
        <dbReference type="SAM" id="MobiDB-lite"/>
    </source>
</evidence>
<proteinExistence type="inferred from homology"/>
<gene>
    <name evidence="1" type="primary">addA</name>
    <name type="ordered locus">SUB0686</name>
</gene>
<protein>
    <recommendedName>
        <fullName evidence="1">ATP-dependent helicase/nuclease subunit A</fullName>
        <ecNumber evidence="1">3.1.-.-</ecNumber>
        <ecNumber evidence="1">5.6.2.4</ecNumber>
    </recommendedName>
    <alternativeName>
        <fullName evidence="1">ATP-dependent helicase/nuclease AddA</fullName>
    </alternativeName>
    <alternativeName>
        <fullName evidence="1">DNA 3'-5' helicase AddA</fullName>
    </alternativeName>
</protein>
<accession>B9DRV0</accession>
<name>ADDA_STRU0</name>
<reference key="1">
    <citation type="journal article" date="2009" name="BMC Genomics">
        <title>Evidence for niche adaptation in the genome of the bovine pathogen Streptococcus uberis.</title>
        <authorList>
            <person name="Ward P.N."/>
            <person name="Holden M.T.G."/>
            <person name="Leigh J.A."/>
            <person name="Lennard N."/>
            <person name="Bignell A."/>
            <person name="Barron A."/>
            <person name="Clark L."/>
            <person name="Quail M.A."/>
            <person name="Woodward J."/>
            <person name="Barrell B.G."/>
            <person name="Egan S.A."/>
            <person name="Field T.R."/>
            <person name="Maskell D."/>
            <person name="Kehoe M."/>
            <person name="Dowson C.G."/>
            <person name="Chanter N."/>
            <person name="Whatmore A.M."/>
            <person name="Bentley S.D."/>
            <person name="Parkhill J."/>
        </authorList>
    </citation>
    <scope>NUCLEOTIDE SEQUENCE [LARGE SCALE GENOMIC DNA]</scope>
    <source>
        <strain>ATCC BAA-854 / 0140J</strain>
    </source>
</reference>
<sequence length="1220" mass="140899">MRFEPFLNQEEIRQLQEFEKNGSKAQKRTPEQIEAIYTNGQNILVSASAGSGKTFVMVERIIDKVLRGISIENMFISTFTVKAANELKERLEKKLREGILMTDDPEMKAYLNDQMQAIALADIGTMDAFTQKLLNEHGYLLGIPPKFRIMQDKSEQELLKNEIYKSLFENYMASDHSQVFLRLVKNFSGNRKDSKSFRDQVYKIYQFSQSTENPKQWLENNFLLAANQYQDYDDLPDETIDALLQSMKETAISLRDLTDLEEYGQMTKAGKPTAKYVKHLTMIEALNDWSMHFDSYYGKSQIGKLAQDLSALLPSGTDVTVAGQKYPIFKDIQSKISQFRHLATLLTYQPETLPLLLELQSFVIDFTEAYLEAKKSENAFEFTDITHFAIEILQNEEAIRKVYQSKYHEVMVDEYQDNNHMQECLLELLSNGHNRFMVGDIKQSIYRFRQADPQIFNQKFKDYQENPENGKLILLKENFRSQSEVIDATNAVFSHLMDEAVGDILYDDNHYLKAGSDKQKIRYPENNCQVLIYDTDQKDNGEDEHDKEDERRTEGQETLSPGEVNILVKEIIRLHQEEAVPFSDITLLVSSRTRNDLLFKTFNQYDIPLVSDGGQENYLKSVEVMVMLDTLRSINNPLNDYALVALMRSPMFAFNEDQLARIALQDSQEGKVEHFYEKVLNSLSHQGQHAELITQELHDQLELFDQSLNAWRDYSRTHSLYELIWKIYNDRFYFDFVGLSPKAEQAQANLYALALRANQFEKTTFKGLTRFISMIDNILNTENDLADVDLAKPKEAVNVMTIHKSKGLEFKYVFILNCDKKFSMADIHSPLILSRQKGVGIKFLADVKKELNATQLPSVKLYLETLPYQINKKELKIATLSEQMRLLYVAMTRAEKKLYLIGKGSQEKLSQKFDTKREGQHLPKALRESITNFQDWLLAIHQVFDSKDLSFTIDFVTDNELGPESIGSISHQSNIMIDDLRDNRQSDSIARAIDMLNNVNQLNQKYEAAINLPTVRTPSQLKKFYQPIMDIDGVEILADKSQTPTTFELPQFSKAKQVTSSQVGSALHELMQRIKITSHVTEKDIQQASQLVDAEAEVMAKIDLHKVKSFFEATELGRLIQVHHDKLYREAPFAMLKTDPQSQEKFVIRGIVDGFLLLEDKIILFDYKTDHYKTPLEMKLKYQEQMALYAESLRKAYDISTIESYLILMGKERIEIVECS</sequence>
<dbReference type="EC" id="3.1.-.-" evidence="1"/>
<dbReference type="EC" id="5.6.2.4" evidence="1"/>
<dbReference type="EMBL" id="AM946015">
    <property type="protein sequence ID" value="CAR41583.1"/>
    <property type="molecule type" value="Genomic_DNA"/>
</dbReference>
<dbReference type="RefSeq" id="WP_012658204.1">
    <property type="nucleotide sequence ID" value="NC_012004.1"/>
</dbReference>
<dbReference type="SMR" id="B9DRV0"/>
<dbReference type="STRING" id="218495.SUB0686"/>
<dbReference type="KEGG" id="sub:SUB0686"/>
<dbReference type="eggNOG" id="COG1074">
    <property type="taxonomic scope" value="Bacteria"/>
</dbReference>
<dbReference type="HOGENOM" id="CLU_001114_3_1_9"/>
<dbReference type="OrthoDB" id="9810135at2"/>
<dbReference type="Proteomes" id="UP000000449">
    <property type="component" value="Chromosome"/>
</dbReference>
<dbReference type="GO" id="GO:0005829">
    <property type="term" value="C:cytosol"/>
    <property type="evidence" value="ECO:0007669"/>
    <property type="project" value="TreeGrafter"/>
</dbReference>
<dbReference type="GO" id="GO:0033202">
    <property type="term" value="C:DNA helicase complex"/>
    <property type="evidence" value="ECO:0007669"/>
    <property type="project" value="TreeGrafter"/>
</dbReference>
<dbReference type="GO" id="GO:0043138">
    <property type="term" value="F:3'-5' DNA helicase activity"/>
    <property type="evidence" value="ECO:0007669"/>
    <property type="project" value="UniProtKB-UniRule"/>
</dbReference>
<dbReference type="GO" id="GO:0008408">
    <property type="term" value="F:3'-5' exonuclease activity"/>
    <property type="evidence" value="ECO:0007669"/>
    <property type="project" value="UniProtKB-UniRule"/>
</dbReference>
<dbReference type="GO" id="GO:0005524">
    <property type="term" value="F:ATP binding"/>
    <property type="evidence" value="ECO:0007669"/>
    <property type="project" value="UniProtKB-UniRule"/>
</dbReference>
<dbReference type="GO" id="GO:0016887">
    <property type="term" value="F:ATP hydrolysis activity"/>
    <property type="evidence" value="ECO:0007669"/>
    <property type="project" value="RHEA"/>
</dbReference>
<dbReference type="GO" id="GO:0003690">
    <property type="term" value="F:double-stranded DNA binding"/>
    <property type="evidence" value="ECO:0007669"/>
    <property type="project" value="UniProtKB-UniRule"/>
</dbReference>
<dbReference type="GO" id="GO:0000724">
    <property type="term" value="P:double-strand break repair via homologous recombination"/>
    <property type="evidence" value="ECO:0007669"/>
    <property type="project" value="UniProtKB-UniRule"/>
</dbReference>
<dbReference type="CDD" id="cd17932">
    <property type="entry name" value="DEXQc_UvrD"/>
    <property type="match status" value="1"/>
</dbReference>
<dbReference type="Gene3D" id="3.90.320.10">
    <property type="match status" value="1"/>
</dbReference>
<dbReference type="Gene3D" id="3.40.50.300">
    <property type="entry name" value="P-loop containing nucleotide triphosphate hydrolases"/>
    <property type="match status" value="4"/>
</dbReference>
<dbReference type="Gene3D" id="1.10.486.10">
    <property type="entry name" value="PCRA, domain 4"/>
    <property type="match status" value="1"/>
</dbReference>
<dbReference type="HAMAP" id="MF_01451">
    <property type="entry name" value="AddA"/>
    <property type="match status" value="1"/>
</dbReference>
<dbReference type="InterPro" id="IPR014152">
    <property type="entry name" value="AddA"/>
</dbReference>
<dbReference type="InterPro" id="IPR014017">
    <property type="entry name" value="DNA_helicase_UvrD-like_C"/>
</dbReference>
<dbReference type="InterPro" id="IPR000212">
    <property type="entry name" value="DNA_helicase_UvrD/REP"/>
</dbReference>
<dbReference type="InterPro" id="IPR027417">
    <property type="entry name" value="P-loop_NTPase"/>
</dbReference>
<dbReference type="InterPro" id="IPR011604">
    <property type="entry name" value="PDDEXK-like_dom_sf"/>
</dbReference>
<dbReference type="InterPro" id="IPR038726">
    <property type="entry name" value="PDDEXK_AddAB-type"/>
</dbReference>
<dbReference type="InterPro" id="IPR011335">
    <property type="entry name" value="Restrct_endonuc-II-like"/>
</dbReference>
<dbReference type="InterPro" id="IPR014016">
    <property type="entry name" value="UvrD-like_ATP-bd"/>
</dbReference>
<dbReference type="NCBIfam" id="TIGR02785">
    <property type="entry name" value="addA_Gpos"/>
    <property type="match status" value="1"/>
</dbReference>
<dbReference type="PANTHER" id="PTHR11070:SF48">
    <property type="entry name" value="ATP-DEPENDENT HELICASE_NUCLEASE SUBUNIT A"/>
    <property type="match status" value="1"/>
</dbReference>
<dbReference type="PANTHER" id="PTHR11070">
    <property type="entry name" value="UVRD / RECB / PCRA DNA HELICASE FAMILY MEMBER"/>
    <property type="match status" value="1"/>
</dbReference>
<dbReference type="Pfam" id="PF12705">
    <property type="entry name" value="PDDEXK_1"/>
    <property type="match status" value="1"/>
</dbReference>
<dbReference type="Pfam" id="PF00580">
    <property type="entry name" value="UvrD-helicase"/>
    <property type="match status" value="1"/>
</dbReference>
<dbReference type="Pfam" id="PF13361">
    <property type="entry name" value="UvrD_C"/>
    <property type="match status" value="1"/>
</dbReference>
<dbReference type="SUPFAM" id="SSF52540">
    <property type="entry name" value="P-loop containing nucleoside triphosphate hydrolases"/>
    <property type="match status" value="1"/>
</dbReference>
<dbReference type="SUPFAM" id="SSF52980">
    <property type="entry name" value="Restriction endonuclease-like"/>
    <property type="match status" value="1"/>
</dbReference>
<dbReference type="PROSITE" id="PS51198">
    <property type="entry name" value="UVRD_HELICASE_ATP_BIND"/>
    <property type="match status" value="1"/>
</dbReference>
<dbReference type="PROSITE" id="PS51217">
    <property type="entry name" value="UVRD_HELICASE_CTER"/>
    <property type="match status" value="1"/>
</dbReference>
<comment type="function">
    <text evidence="1">The heterodimer acts as both an ATP-dependent DNA helicase and an ATP-dependent, dual-direction single-stranded exonuclease. Recognizes the chi site generating a DNA molecule suitable for the initiation of homologous recombination. The AddA nuclease domain is required for chi fragment generation; this subunit has the helicase and 3' -&gt; 5' nuclease activities.</text>
</comment>
<comment type="catalytic activity">
    <reaction evidence="1">
        <text>Couples ATP hydrolysis with the unwinding of duplex DNA by translocating in the 3'-5' direction.</text>
        <dbReference type="EC" id="5.6.2.4"/>
    </reaction>
</comment>
<comment type="catalytic activity">
    <reaction evidence="1">
        <text>ATP + H2O = ADP + phosphate + H(+)</text>
        <dbReference type="Rhea" id="RHEA:13065"/>
        <dbReference type="ChEBI" id="CHEBI:15377"/>
        <dbReference type="ChEBI" id="CHEBI:15378"/>
        <dbReference type="ChEBI" id="CHEBI:30616"/>
        <dbReference type="ChEBI" id="CHEBI:43474"/>
        <dbReference type="ChEBI" id="CHEBI:456216"/>
        <dbReference type="EC" id="5.6.2.4"/>
    </reaction>
</comment>
<comment type="cofactor">
    <cofactor evidence="1">
        <name>Mg(2+)</name>
        <dbReference type="ChEBI" id="CHEBI:18420"/>
    </cofactor>
</comment>
<comment type="subunit">
    <text evidence="1">Heterodimer of AddA and AddB/RexB.</text>
</comment>
<comment type="similarity">
    <text evidence="1">Belongs to the helicase family. AddA subfamily.</text>
</comment>
<keyword id="KW-0067">ATP-binding</keyword>
<keyword id="KW-0227">DNA damage</keyword>
<keyword id="KW-0234">DNA repair</keyword>
<keyword id="KW-0238">DNA-binding</keyword>
<keyword id="KW-0269">Exonuclease</keyword>
<keyword id="KW-0347">Helicase</keyword>
<keyword id="KW-0378">Hydrolase</keyword>
<keyword id="KW-0413">Isomerase</keyword>
<keyword id="KW-0540">Nuclease</keyword>
<keyword id="KW-0547">Nucleotide-binding</keyword>
<keyword id="KW-1185">Reference proteome</keyword>